<evidence type="ECO:0000250" key="1">
    <source>
        <dbReference type="UniProtKB" id="C8VTV4"/>
    </source>
</evidence>
<evidence type="ECO:0000255" key="2">
    <source>
        <dbReference type="PROSITE-ProRule" id="PRU01165"/>
    </source>
</evidence>
<evidence type="ECO:0000256" key="3">
    <source>
        <dbReference type="SAM" id="MobiDB-lite"/>
    </source>
</evidence>
<evidence type="ECO:0000269" key="4">
    <source>
    </source>
</evidence>
<evidence type="ECO:0000269" key="5">
    <source>
    </source>
</evidence>
<evidence type="ECO:0000269" key="6">
    <source>
    </source>
</evidence>
<evidence type="ECO:0000303" key="7">
    <source>
    </source>
</evidence>
<evidence type="ECO:0000305" key="8"/>
<accession>Q69B22</accession>
<gene>
    <name evidence="7" type="primary">veA</name>
</gene>
<proteinExistence type="inferred from homology"/>
<dbReference type="EMBL" id="AY445513">
    <property type="protein sequence ID" value="AAS07022.1"/>
    <property type="molecule type" value="Genomic_DNA"/>
</dbReference>
<dbReference type="SMR" id="Q69B22"/>
<dbReference type="VEuPathDB" id="FungiDB:BDV34DRAFT_111450"/>
<dbReference type="OMA" id="TDITFSY"/>
<dbReference type="GO" id="GO:0005737">
    <property type="term" value="C:cytoplasm"/>
    <property type="evidence" value="ECO:0007669"/>
    <property type="project" value="UniProtKB-SubCell"/>
</dbReference>
<dbReference type="GO" id="GO:0005634">
    <property type="term" value="C:nucleus"/>
    <property type="evidence" value="ECO:0007669"/>
    <property type="project" value="UniProtKB-SubCell"/>
</dbReference>
<dbReference type="GO" id="GO:0030435">
    <property type="term" value="P:sporulation resulting in formation of a cellular spore"/>
    <property type="evidence" value="ECO:0007669"/>
    <property type="project" value="UniProtKB-KW"/>
</dbReference>
<dbReference type="FunFam" id="2.60.40.3960:FF:000001">
    <property type="entry name" value="Sexual development activator VeA"/>
    <property type="match status" value="1"/>
</dbReference>
<dbReference type="Gene3D" id="2.60.40.3960">
    <property type="entry name" value="Velvet domain"/>
    <property type="match status" value="1"/>
</dbReference>
<dbReference type="InterPro" id="IPR021740">
    <property type="entry name" value="Velvet"/>
</dbReference>
<dbReference type="InterPro" id="IPR037525">
    <property type="entry name" value="Velvet_dom"/>
</dbReference>
<dbReference type="InterPro" id="IPR038491">
    <property type="entry name" value="Velvet_dom_sf"/>
</dbReference>
<dbReference type="PANTHER" id="PTHR33572:SF14">
    <property type="entry name" value="DEVELOPMENTAL AND SECONDARY METABOLISM REGULATOR VEA"/>
    <property type="match status" value="1"/>
</dbReference>
<dbReference type="PANTHER" id="PTHR33572">
    <property type="entry name" value="SPORE DEVELOPMENT REGULATOR VOSA"/>
    <property type="match status" value="1"/>
</dbReference>
<dbReference type="Pfam" id="PF11754">
    <property type="entry name" value="Velvet"/>
    <property type="match status" value="2"/>
</dbReference>
<dbReference type="PROSITE" id="PS51821">
    <property type="entry name" value="VELVET"/>
    <property type="match status" value="1"/>
</dbReference>
<protein>
    <recommendedName>
        <fullName evidence="8">Developmental and secondary metabolism regulator veA</fullName>
    </recommendedName>
    <alternativeName>
        <fullName evidence="8">Velvet complex subunit A</fullName>
    </alternativeName>
</protein>
<name>VEA_ASPPA</name>
<comment type="function">
    <text evidence="1 4 5 6">Component of the velvet transcription factor complex that controls sexual/asexual developmental ratio in response to light, promoting sexual development in the darkness while stimulating asexual sporulation under illumination (By similarity). The velvet complex hat acts as a global regulator for secondary metabolite gene expression (PubMed:15294809). Controls the expression of the aflatoxin gene cluster (PubMed:15294809, PubMed:19889978). Required for the expression of aflR and aflJ (PubMed:15294809). Mediates the coordination of aflatoxigenic vesicles (aflatoxisomes) development with aflatoxin gene expression (PubMed:19889978). Regulates branched chain amino acid and ethanol metabolism and acts as a positive regulator of mitochondrial and peroxisomal beta-oxidation (PubMed:20735852).</text>
</comment>
<comment type="subunit">
    <text evidence="1">Component of the heterotrimeric velvet complex composed of laeA, veA and velB; VeA acting as a bridging protein between laeA and velB (By similarity).</text>
</comment>
<comment type="subcellular location">
    <subcellularLocation>
        <location evidence="1">Nucleus</location>
    </subcellularLocation>
    <subcellularLocation>
        <location evidence="1">Cytoplasm</location>
    </subcellularLocation>
    <text evidence="1">Enriched in the nucleus in the dark (By similarity).</text>
</comment>
<comment type="domain">
    <text evidence="1">The C-terminal PEST domain is a region rich in proline, glutamic acid, serine and threonine residues that is required for the light-dependent regulation of development and secondary metabolism (By similarity).</text>
</comment>
<comment type="disruption phenotype">
    <text evidence="4 5 6">Blocks sclerotial formation, reduces conidiation both on the culture medium and on peanut seeds, and abolishes production of the visible orange aflatoxin intermediate versicolorin A (PubMed:15294809). Fails to accumulate aflatoxisomes under aflatoxin-inducing conditions in the dark (PubMed:19889978). Enhances accumulation of metabolites in branched chain amino acid catabolism and increases ethanol production (PubMed:20735852).</text>
</comment>
<comment type="similarity">
    <text evidence="8">Belongs to the velvet family. VeA subfamily.</text>
</comment>
<organism>
    <name type="scientific">Aspergillus parasiticus</name>
    <dbReference type="NCBI Taxonomy" id="5067"/>
    <lineage>
        <taxon>Eukaryota</taxon>
        <taxon>Fungi</taxon>
        <taxon>Dikarya</taxon>
        <taxon>Ascomycota</taxon>
        <taxon>Pezizomycotina</taxon>
        <taxon>Eurotiomycetes</taxon>
        <taxon>Eurotiomycetidae</taxon>
        <taxon>Eurotiales</taxon>
        <taxon>Aspergillaceae</taxon>
        <taxon>Aspergillus</taxon>
        <taxon>Aspergillus subgen. Circumdati</taxon>
    </lineage>
</organism>
<feature type="chain" id="PRO_0000435762" description="Developmental and secondary metabolism regulator veA">
    <location>
        <begin position="1"/>
        <end position="574"/>
    </location>
</feature>
<feature type="domain" description="Velvet" evidence="2">
    <location>
        <begin position="25"/>
        <end position="230"/>
    </location>
</feature>
<feature type="region of interest" description="Disordered" evidence="3">
    <location>
        <begin position="1"/>
        <end position="22"/>
    </location>
</feature>
<feature type="region of interest" description="Disordered" evidence="3">
    <location>
        <begin position="39"/>
        <end position="60"/>
    </location>
</feature>
<feature type="region of interest" description="Disordered" evidence="3">
    <location>
        <begin position="255"/>
        <end position="500"/>
    </location>
</feature>
<feature type="region of interest" description="PEST" evidence="1">
    <location>
        <begin position="457"/>
        <end position="501"/>
    </location>
</feature>
<feature type="region of interest" description="Disordered" evidence="3">
    <location>
        <begin position="513"/>
        <end position="548"/>
    </location>
</feature>
<feature type="short sequence motif" description="Nuclear localization signal" evidence="1">
    <location>
        <begin position="39"/>
        <end position="44"/>
    </location>
</feature>
<feature type="compositionally biased region" description="Pro residues" evidence="3">
    <location>
        <begin position="314"/>
        <end position="323"/>
    </location>
</feature>
<feature type="compositionally biased region" description="Pro residues" evidence="3">
    <location>
        <begin position="330"/>
        <end position="341"/>
    </location>
</feature>
<feature type="compositionally biased region" description="Polar residues" evidence="3">
    <location>
        <begin position="343"/>
        <end position="359"/>
    </location>
</feature>
<feature type="compositionally biased region" description="Polar residues" evidence="3">
    <location>
        <begin position="385"/>
        <end position="394"/>
    </location>
</feature>
<feature type="compositionally biased region" description="Polar residues" evidence="3">
    <location>
        <begin position="402"/>
        <end position="415"/>
    </location>
</feature>
<feature type="compositionally biased region" description="Polar residues" evidence="3">
    <location>
        <begin position="448"/>
        <end position="458"/>
    </location>
</feature>
<feature type="compositionally biased region" description="Low complexity" evidence="3">
    <location>
        <begin position="459"/>
        <end position="474"/>
    </location>
</feature>
<feature type="compositionally biased region" description="Low complexity" evidence="3">
    <location>
        <begin position="482"/>
        <end position="493"/>
    </location>
</feature>
<feature type="compositionally biased region" description="Basic and acidic residues" evidence="3">
    <location>
        <begin position="513"/>
        <end position="525"/>
    </location>
</feature>
<feature type="compositionally biased region" description="Basic and acidic residues" evidence="3">
    <location>
        <begin position="532"/>
        <end position="543"/>
    </location>
</feature>
<reference key="1">
    <citation type="journal article" date="2004" name="Appl. Environ. Microbiol.">
        <title>veA is required for toxin and sclerotial production in Aspergillus parasiticus.</title>
        <authorList>
            <person name="Calvo A.M."/>
            <person name="Bok J."/>
            <person name="Brooks W."/>
            <person name="Keller N.P."/>
        </authorList>
    </citation>
    <scope>NUCLEOTIDE SEQUENCE [GENOMIC DNA]</scope>
    <scope>FUNCTION</scope>
    <scope>DISRUPTION PHENOTYPE</scope>
</reference>
<reference key="2">
    <citation type="journal article" date="2009" name="Proc. Natl. Acad. Sci. U.S.A.">
        <title>A key role for vesicles in fungal secondary metabolism.</title>
        <authorList>
            <person name="Chanda A."/>
            <person name="Roze L.V."/>
            <person name="Kang S."/>
            <person name="Artymovich K.A."/>
            <person name="Hicks G.R."/>
            <person name="Raikhel N.V."/>
            <person name="Calvo A.M."/>
            <person name="Linz J.E."/>
        </authorList>
    </citation>
    <scope>FUNCTION</scope>
    <scope>DISRUPTION PHENOTYPE</scope>
</reference>
<reference key="3">
    <citation type="journal article" date="2010" name="BMC Biochem.">
        <title>Volatile profiling reveals intracellular metabolic changes in Aspergillus parasiticus: veA regulates branched chain amino acid and ethanol metabolism.</title>
        <authorList>
            <person name="Roze L.V."/>
            <person name="Chanda A."/>
            <person name="Laivenieks M."/>
            <person name="Beaudry R.M."/>
            <person name="Artymovich K.A."/>
            <person name="Koptina A.V."/>
            <person name="Awad D.W."/>
            <person name="Valeeva D."/>
            <person name="Jones A.D."/>
            <person name="Linz J.E."/>
        </authorList>
    </citation>
    <scope>FUNCTION</scope>
    <scope>DISRUPTION PHENOTYPE</scope>
</reference>
<keyword id="KW-0963">Cytoplasm</keyword>
<keyword id="KW-0539">Nucleus</keyword>
<keyword id="KW-0749">Sporulation</keyword>
<keyword id="KW-0804">Transcription</keyword>
<keyword id="KW-0805">Transcription regulation</keyword>
<sequence length="574" mass="62948">MATRAPLAPPPNETEASVSRITREGKKLTYKLNVMQQPERARACGAGAKSSADRRPVDPPPVVELRVYESDPNDDLNKTDITFAYNANFFLYATLETARPMAQGRFAPNPTCPVLTGVPVAGVAYLDRPSQAGYFIFPDLSVRHEGVYRLNFHLYEETKESKDANENAPIQSMSNPMPAKPMAPKSFLEFRLEVVSVPFTVFSAKKFPGLATSTSLSRVIAEQGCRVRIRRDVRMRRRGEKRTDDYDYDEERVYRSSDRFSTPDTHGYAGTPVERPRSTSTSTVDPSFPYGADAQRRSSGATEHGFQGAQPYQRPMPPAPVPAPVAVSTPAPPAPPAPPSHNPGYQSHLSFGSTQTQYPAPQLPPTPQSASTLAAPYSPHPSYSHARNPSTSAEYETPGYSYPSSRVSTERSSYPKNGLPPLRLEPPKPLNMPSGEPRSSDPNAYHSVAQSAGPRSQTPSSSLVPSLPPLKALSGDYPNNLSQPSSSISQSPSHDLGAGKKFLWDTGASLSKRSYEDSFGHDDRPLYNGMRPDTESHPRRLSDAGRNFYNETRDEMAYKRANGRMATKISPALQ</sequence>